<accession>Q5ENY9</accession>
<keyword id="KW-0007">Acetylation</keyword>
<keyword id="KW-0143">Chaperone</keyword>
<keyword id="KW-0963">Cytoplasm</keyword>
<keyword id="KW-0273">Eye lens protein</keyword>
<keyword id="KW-0325">Glycoprotein</keyword>
<keyword id="KW-0458">Lysosome</keyword>
<keyword id="KW-0479">Metal-binding</keyword>
<keyword id="KW-0488">Methylation</keyword>
<keyword id="KW-0539">Nucleus</keyword>
<keyword id="KW-0597">Phosphoprotein</keyword>
<keyword id="KW-1185">Reference proteome</keyword>
<keyword id="KW-0964">Secreted</keyword>
<keyword id="KW-0862">Zinc</keyword>
<sequence>MDIAIHHPWIRRPFFPFHSPSRLFDQFFGEHLLESDLFPASTSLSPFYLRPPSFLRAPSWIDTGLSEVRLEKDRFSVNLDVKHFSPEELKVKVLGDVIEVHGKHEERQDEHGFISREFHRKYRIPADVDPLTITSSLSSDGVLTMNGPRKQASGPERTIPITREEKPAVTAAPKK</sequence>
<evidence type="ECO:0000250" key="1"/>
<evidence type="ECO:0000250" key="2">
    <source>
        <dbReference type="UniProtKB" id="P02510"/>
    </source>
</evidence>
<evidence type="ECO:0000250" key="3">
    <source>
        <dbReference type="UniProtKB" id="P02511"/>
    </source>
</evidence>
<evidence type="ECO:0000250" key="4">
    <source>
        <dbReference type="UniProtKB" id="P23927"/>
    </source>
</evidence>
<evidence type="ECO:0000250" key="5">
    <source>
        <dbReference type="UniProtKB" id="P23928"/>
    </source>
</evidence>
<evidence type="ECO:0000255" key="6">
    <source>
        <dbReference type="PROSITE-ProRule" id="PRU00285"/>
    </source>
</evidence>
<evidence type="ECO:0000256" key="7">
    <source>
        <dbReference type="SAM" id="MobiDB-lite"/>
    </source>
</evidence>
<feature type="chain" id="PRO_0000125914" description="Alpha-crystallin B chain">
    <location>
        <begin position="1"/>
        <end position="175"/>
    </location>
</feature>
<feature type="domain" description="sHSP" evidence="6">
    <location>
        <begin position="56"/>
        <end position="164"/>
    </location>
</feature>
<feature type="region of interest" description="Disordered" evidence="7">
    <location>
        <begin position="139"/>
        <end position="175"/>
    </location>
</feature>
<feature type="binding site" evidence="1">
    <location>
        <position position="83"/>
    </location>
    <ligand>
        <name>Zn(2+)</name>
        <dbReference type="ChEBI" id="CHEBI:29105"/>
        <label>1</label>
    </ligand>
</feature>
<feature type="binding site" evidence="1">
    <location>
        <position position="104"/>
    </location>
    <ligand>
        <name>Zn(2+)</name>
        <dbReference type="ChEBI" id="CHEBI:29105"/>
        <label>2</label>
    </ligand>
</feature>
<feature type="binding site" evidence="1">
    <location>
        <position position="106"/>
    </location>
    <ligand>
        <name>Zn(2+)</name>
        <dbReference type="ChEBI" id="CHEBI:29105"/>
        <label>2</label>
    </ligand>
</feature>
<feature type="binding site" evidence="1">
    <location>
        <position position="111"/>
    </location>
    <ligand>
        <name>Zn(2+)</name>
        <dbReference type="ChEBI" id="CHEBI:29105"/>
        <label>1</label>
    </ligand>
</feature>
<feature type="binding site" evidence="1">
    <location>
        <position position="119"/>
    </location>
    <ligand>
        <name>Zn(2+)</name>
        <dbReference type="ChEBI" id="CHEBI:29105"/>
        <label>1</label>
    </ligand>
</feature>
<feature type="modified residue" description="N-acetylmethionine" evidence="2">
    <location>
        <position position="1"/>
    </location>
</feature>
<feature type="modified residue" description="Phosphoserine" evidence="2">
    <location>
        <position position="19"/>
    </location>
</feature>
<feature type="modified residue" description="Phosphoserine" evidence="2">
    <location>
        <position position="45"/>
    </location>
</feature>
<feature type="modified residue" description="Phosphoserine" evidence="2">
    <location>
        <position position="59"/>
    </location>
</feature>
<feature type="modified residue" description="N6-acetyllysine" evidence="3">
    <location>
        <position position="92"/>
    </location>
</feature>
<feature type="modified residue" description="N6-acetyllysine" evidence="3">
    <location>
        <position position="166"/>
    </location>
</feature>
<feature type="glycosylation site" description="O-linked (GlcNAc) serine" evidence="3">
    <location>
        <position position="41"/>
    </location>
</feature>
<feature type="glycosylation site" description="O-linked (GlcNAc) threonine" evidence="5">
    <location>
        <position position="170"/>
    </location>
</feature>
<dbReference type="EMBL" id="AY819023">
    <property type="protein sequence ID" value="AAW79079.1"/>
    <property type="molecule type" value="mRNA"/>
</dbReference>
<dbReference type="RefSeq" id="NP_001012475.1">
    <property type="nucleotide sequence ID" value="NM_001012457.2"/>
</dbReference>
<dbReference type="SMR" id="Q5ENY9"/>
<dbReference type="STRING" id="9940.ENSOARP00000016300"/>
<dbReference type="GlyCosmos" id="Q5ENY9">
    <property type="glycosylation" value="1 site, No reported glycans"/>
</dbReference>
<dbReference type="PaxDb" id="9940-ENSOARP00000016300"/>
<dbReference type="GeneID" id="497274"/>
<dbReference type="KEGG" id="oas:497274"/>
<dbReference type="CTD" id="1410"/>
<dbReference type="eggNOG" id="KOG3591">
    <property type="taxonomic scope" value="Eukaryota"/>
</dbReference>
<dbReference type="OrthoDB" id="1431247at2759"/>
<dbReference type="Proteomes" id="UP000002356">
    <property type="component" value="Unplaced"/>
</dbReference>
<dbReference type="GO" id="GO:0005737">
    <property type="term" value="C:cytoplasm"/>
    <property type="evidence" value="ECO:0000250"/>
    <property type="project" value="UniProtKB"/>
</dbReference>
<dbReference type="GO" id="GO:0005576">
    <property type="term" value="C:extracellular region"/>
    <property type="evidence" value="ECO:0007669"/>
    <property type="project" value="UniProtKB-SubCell"/>
</dbReference>
<dbReference type="GO" id="GO:0005764">
    <property type="term" value="C:lysosome"/>
    <property type="evidence" value="ECO:0007669"/>
    <property type="project" value="UniProtKB-SubCell"/>
</dbReference>
<dbReference type="GO" id="GO:0005634">
    <property type="term" value="C:nucleus"/>
    <property type="evidence" value="ECO:0000250"/>
    <property type="project" value="UniProtKB"/>
</dbReference>
<dbReference type="GO" id="GO:0032991">
    <property type="term" value="C:protein-containing complex"/>
    <property type="evidence" value="ECO:0000250"/>
    <property type="project" value="UniProtKB"/>
</dbReference>
<dbReference type="GO" id="GO:0046872">
    <property type="term" value="F:metal ion binding"/>
    <property type="evidence" value="ECO:0007669"/>
    <property type="project" value="UniProtKB-KW"/>
</dbReference>
<dbReference type="GO" id="GO:0042803">
    <property type="term" value="F:protein homodimerization activity"/>
    <property type="evidence" value="ECO:0000250"/>
    <property type="project" value="UniProtKB"/>
</dbReference>
<dbReference type="GO" id="GO:0005212">
    <property type="term" value="F:structural constituent of eye lens"/>
    <property type="evidence" value="ECO:0007669"/>
    <property type="project" value="UniProtKB-KW"/>
</dbReference>
<dbReference type="GO" id="GO:0051082">
    <property type="term" value="F:unfolded protein binding"/>
    <property type="evidence" value="ECO:0007669"/>
    <property type="project" value="TreeGrafter"/>
</dbReference>
<dbReference type="GO" id="GO:0043066">
    <property type="term" value="P:negative regulation of apoptotic process"/>
    <property type="evidence" value="ECO:0007669"/>
    <property type="project" value="TreeGrafter"/>
</dbReference>
<dbReference type="GO" id="GO:0045892">
    <property type="term" value="P:negative regulation of DNA-templated transcription"/>
    <property type="evidence" value="ECO:0000250"/>
    <property type="project" value="UniProtKB"/>
</dbReference>
<dbReference type="GO" id="GO:0042026">
    <property type="term" value="P:protein refolding"/>
    <property type="evidence" value="ECO:0007669"/>
    <property type="project" value="TreeGrafter"/>
</dbReference>
<dbReference type="GO" id="GO:0009408">
    <property type="term" value="P:response to heat"/>
    <property type="evidence" value="ECO:0007669"/>
    <property type="project" value="TreeGrafter"/>
</dbReference>
<dbReference type="FunFam" id="2.60.40.790:FF:000011">
    <property type="entry name" value="Alpha-crystallin B chain"/>
    <property type="match status" value="1"/>
</dbReference>
<dbReference type="Gene3D" id="2.60.40.790">
    <property type="match status" value="1"/>
</dbReference>
<dbReference type="InterPro" id="IPR002068">
    <property type="entry name" value="A-crystallin/Hsp20_dom"/>
</dbReference>
<dbReference type="InterPro" id="IPR055269">
    <property type="entry name" value="Alpha-crystallin/HSP_16"/>
</dbReference>
<dbReference type="InterPro" id="IPR001436">
    <property type="entry name" value="Alpha-crystallin/sHSP_animal"/>
</dbReference>
<dbReference type="InterPro" id="IPR003090">
    <property type="entry name" value="Alpha-crystallin_N"/>
</dbReference>
<dbReference type="InterPro" id="IPR008978">
    <property type="entry name" value="HSP20-like_chaperone"/>
</dbReference>
<dbReference type="PANTHER" id="PTHR45640:SF5">
    <property type="entry name" value="ALPHA-CRYSTALLIN B CHAIN"/>
    <property type="match status" value="1"/>
</dbReference>
<dbReference type="PANTHER" id="PTHR45640">
    <property type="entry name" value="HEAT SHOCK PROTEIN HSP-12.2-RELATED"/>
    <property type="match status" value="1"/>
</dbReference>
<dbReference type="Pfam" id="PF00525">
    <property type="entry name" value="Crystallin"/>
    <property type="match status" value="1"/>
</dbReference>
<dbReference type="Pfam" id="PF00011">
    <property type="entry name" value="HSP20"/>
    <property type="match status" value="1"/>
</dbReference>
<dbReference type="PIRSF" id="PIRSF036514">
    <property type="entry name" value="Sm_HSP_B1"/>
    <property type="match status" value="1"/>
</dbReference>
<dbReference type="PRINTS" id="PR00299">
    <property type="entry name" value="ACRYSTALLIN"/>
</dbReference>
<dbReference type="SUPFAM" id="SSF49764">
    <property type="entry name" value="HSP20-like chaperones"/>
    <property type="match status" value="1"/>
</dbReference>
<dbReference type="PROSITE" id="PS01031">
    <property type="entry name" value="SHSP"/>
    <property type="match status" value="1"/>
</dbReference>
<comment type="function">
    <text evidence="4">May contribute to the transparency and refractive index of the lens. Has chaperone-like activity, preventing aggregation of various proteins under a wide range of stress conditions. In lens epithelial cells, stabilizes the ATP6V1A protein, preventing its degradation by the proteasome (By similarity).</text>
</comment>
<comment type="subunit">
    <text evidence="3 4">Heteromer composed of three CRYAA and one CRYAB subunits. Aggregates with homologous proteins, including the small heat shock protein HSPB1, to form large heteromeric complexes. Inter-subunit bridging via zinc ions enhances stability, which is crucial as there is no protein turn over in the lens. Interacts with HSPBAP1 and TTN/titin. Interacts with TMEM109; in the cellular response to DNA damage. Interacts with DES; binds rapidly during early stages of DES filament assembly and a reduced binding seen in the later stages. Interacts with ATP6V1A and with MTOR, forming a ternary complex (By similarity).</text>
</comment>
<comment type="subcellular location">
    <subcellularLocation>
        <location evidence="3">Cytoplasm</location>
    </subcellularLocation>
    <subcellularLocation>
        <location evidence="3">Nucleus</location>
    </subcellularLocation>
    <subcellularLocation>
        <location evidence="3">Secreted</location>
    </subcellularLocation>
    <subcellularLocation>
        <location evidence="4">Lysosome</location>
    </subcellularLocation>
    <text evidence="3">Translocates to the nucleus during heat shock and resides in sub-nuclear structures known as SC35 speckles or nuclear splicing speckles. Localizes at the Z-bands and the intercalated disk in cardiomyocytes.</text>
</comment>
<comment type="similarity">
    <text evidence="6">Belongs to the small heat shock protein (HSP20) family.</text>
</comment>
<name>CRYAB_SHEEP</name>
<organism>
    <name type="scientific">Ovis aries</name>
    <name type="common">Sheep</name>
    <dbReference type="NCBI Taxonomy" id="9940"/>
    <lineage>
        <taxon>Eukaryota</taxon>
        <taxon>Metazoa</taxon>
        <taxon>Chordata</taxon>
        <taxon>Craniata</taxon>
        <taxon>Vertebrata</taxon>
        <taxon>Euteleostomi</taxon>
        <taxon>Mammalia</taxon>
        <taxon>Eutheria</taxon>
        <taxon>Laurasiatheria</taxon>
        <taxon>Artiodactyla</taxon>
        <taxon>Ruminantia</taxon>
        <taxon>Pecora</taxon>
        <taxon>Bovidae</taxon>
        <taxon>Caprinae</taxon>
        <taxon>Ovis</taxon>
    </lineage>
</organism>
<gene>
    <name type="primary">CRYAB</name>
</gene>
<reference key="1">
    <citation type="submission" date="2004-11" db="EMBL/GenBank/DDBJ databases">
        <authorList>
            <person name="Robertson L.J.G."/>
        </authorList>
    </citation>
    <scope>NUCLEOTIDE SEQUENCE [MRNA]</scope>
</reference>
<protein>
    <recommendedName>
        <fullName>Alpha-crystallin B chain</fullName>
    </recommendedName>
    <alternativeName>
        <fullName>Alpha(B)-crystallin</fullName>
    </alternativeName>
</protein>
<proteinExistence type="evidence at transcript level"/>